<feature type="chain" id="PRO_0000409199" description="Spindle pole body component 110">
    <location>
        <begin position="1"/>
        <end position="872"/>
    </location>
</feature>
<feature type="region of interest" description="Disordered" evidence="3">
    <location>
        <begin position="15"/>
        <end position="121"/>
    </location>
</feature>
<feature type="coiled-coil region" evidence="2">
    <location>
        <begin position="176"/>
        <end position="723"/>
    </location>
</feature>
<feature type="compositionally biased region" description="Acidic residues" evidence="3">
    <location>
        <begin position="65"/>
        <end position="74"/>
    </location>
</feature>
<accession>Q6FY25</accession>
<name>SP110_CANGA</name>
<protein>
    <recommendedName>
        <fullName>Spindle pole body component 110</fullName>
    </recommendedName>
    <alternativeName>
        <fullName>Spindle pole body spacer protein SPC110</fullName>
    </alternativeName>
</protein>
<reference key="1">
    <citation type="journal article" date="2004" name="Nature">
        <title>Genome evolution in yeasts.</title>
        <authorList>
            <person name="Dujon B."/>
            <person name="Sherman D."/>
            <person name="Fischer G."/>
            <person name="Durrens P."/>
            <person name="Casaregola S."/>
            <person name="Lafontaine I."/>
            <person name="de Montigny J."/>
            <person name="Marck C."/>
            <person name="Neuveglise C."/>
            <person name="Talla E."/>
            <person name="Goffard N."/>
            <person name="Frangeul L."/>
            <person name="Aigle M."/>
            <person name="Anthouard V."/>
            <person name="Babour A."/>
            <person name="Barbe V."/>
            <person name="Barnay S."/>
            <person name="Blanchin S."/>
            <person name="Beckerich J.-M."/>
            <person name="Beyne E."/>
            <person name="Bleykasten C."/>
            <person name="Boisrame A."/>
            <person name="Boyer J."/>
            <person name="Cattolico L."/>
            <person name="Confanioleri F."/>
            <person name="de Daruvar A."/>
            <person name="Despons L."/>
            <person name="Fabre E."/>
            <person name="Fairhead C."/>
            <person name="Ferry-Dumazet H."/>
            <person name="Groppi A."/>
            <person name="Hantraye F."/>
            <person name="Hennequin C."/>
            <person name="Jauniaux N."/>
            <person name="Joyet P."/>
            <person name="Kachouri R."/>
            <person name="Kerrest A."/>
            <person name="Koszul R."/>
            <person name="Lemaire M."/>
            <person name="Lesur I."/>
            <person name="Ma L."/>
            <person name="Muller H."/>
            <person name="Nicaud J.-M."/>
            <person name="Nikolski M."/>
            <person name="Oztas S."/>
            <person name="Ozier-Kalogeropoulos O."/>
            <person name="Pellenz S."/>
            <person name="Potier S."/>
            <person name="Richard G.-F."/>
            <person name="Straub M.-L."/>
            <person name="Suleau A."/>
            <person name="Swennen D."/>
            <person name="Tekaia F."/>
            <person name="Wesolowski-Louvel M."/>
            <person name="Westhof E."/>
            <person name="Wirth B."/>
            <person name="Zeniou-Meyer M."/>
            <person name="Zivanovic Y."/>
            <person name="Bolotin-Fukuhara M."/>
            <person name="Thierry A."/>
            <person name="Bouchier C."/>
            <person name="Caudron B."/>
            <person name="Scarpelli C."/>
            <person name="Gaillardin C."/>
            <person name="Weissenbach J."/>
            <person name="Wincker P."/>
            <person name="Souciet J.-L."/>
        </authorList>
    </citation>
    <scope>NUCLEOTIDE SEQUENCE [LARGE SCALE GENOMIC DNA]</scope>
    <source>
        <strain>ATCC 2001 / BCRC 20586 / JCM 3761 / NBRC 0622 / NRRL Y-65 / CBS 138</strain>
    </source>
</reference>
<dbReference type="EMBL" id="CR380947">
    <property type="protein sequence ID" value="CAG57770.1"/>
    <property type="molecule type" value="Genomic_DNA"/>
</dbReference>
<dbReference type="RefSeq" id="XP_444877.1">
    <property type="nucleotide sequence ID" value="XM_444877.1"/>
</dbReference>
<dbReference type="SMR" id="Q6FY25"/>
<dbReference type="FunCoup" id="Q6FY25">
    <property type="interactions" value="344"/>
</dbReference>
<dbReference type="EnsemblFungi" id="CAGL0A02596g-T">
    <property type="protein sequence ID" value="CAGL0A02596g-T-p1"/>
    <property type="gene ID" value="CAGL0A02596g"/>
</dbReference>
<dbReference type="KEGG" id="cgr:2886370"/>
<dbReference type="CGD" id="CAL0126697">
    <property type="gene designation" value="CAGL0A02596g"/>
</dbReference>
<dbReference type="VEuPathDB" id="FungiDB:CAGL0A02596g"/>
<dbReference type="eggNOG" id="ENOG502QUTQ">
    <property type="taxonomic scope" value="Eukaryota"/>
</dbReference>
<dbReference type="HOGENOM" id="CLU_329279_0_0_1"/>
<dbReference type="InParanoid" id="Q6FY25"/>
<dbReference type="OMA" id="MENASNK"/>
<dbReference type="Proteomes" id="UP000002428">
    <property type="component" value="Chromosome A"/>
</dbReference>
<dbReference type="GO" id="GO:0005737">
    <property type="term" value="C:cytoplasm"/>
    <property type="evidence" value="ECO:0007669"/>
    <property type="project" value="UniProtKB-KW"/>
</dbReference>
<dbReference type="GO" id="GO:0005634">
    <property type="term" value="C:nucleus"/>
    <property type="evidence" value="ECO:0007669"/>
    <property type="project" value="UniProtKB-SubCell"/>
</dbReference>
<dbReference type="GO" id="GO:0005816">
    <property type="term" value="C:spindle pole body"/>
    <property type="evidence" value="ECO:0007669"/>
    <property type="project" value="UniProtKB-SubCell"/>
</dbReference>
<dbReference type="Gene3D" id="1.10.287.1490">
    <property type="match status" value="1"/>
</dbReference>
<dbReference type="Gene3D" id="6.10.310.10">
    <property type="match status" value="1"/>
</dbReference>
<dbReference type="InterPro" id="IPR040593">
    <property type="entry name" value="Spc110_C"/>
</dbReference>
<dbReference type="PANTHER" id="PTHR45615:SF63">
    <property type="entry name" value="CHROMOSOME UNDETERMINED SCAFFOLD_10, WHOLE GENOME SHOTGUN SEQUENCE"/>
    <property type="match status" value="1"/>
</dbReference>
<dbReference type="PANTHER" id="PTHR45615">
    <property type="entry name" value="MYOSIN HEAVY CHAIN, NON-MUSCLE"/>
    <property type="match status" value="1"/>
</dbReference>
<dbReference type="Pfam" id="PF18520">
    <property type="entry name" value="Spc110_C"/>
    <property type="match status" value="1"/>
</dbReference>
<comment type="function">
    <text evidence="1">Component of the spindle pole body (SPB) required for the proper execution of spindle pole body (SPB) duplication. Potential role in cross-linking filaments or anchoring other molecules. It is essential for growth (By similarity).</text>
</comment>
<comment type="subunit">
    <text evidence="1">Homodimer.</text>
</comment>
<comment type="subcellular location">
    <subcellularLocation>
        <location evidence="1">Nucleus</location>
    </subcellularLocation>
    <subcellularLocation>
        <location evidence="1">Cytoplasm</location>
        <location evidence="1">Cytoskeleton</location>
        <location evidence="1">Microtubule organizing center</location>
        <location evidence="1">Spindle pole body</location>
    </subcellularLocation>
    <text evidence="1">Tightly associated with the nucleus. It is present in a granular pattern that excludes the nucleolus.</text>
</comment>
<comment type="similarity">
    <text evidence="4">Belongs to the SPC110 family.</text>
</comment>
<keyword id="KW-0175">Coiled coil</keyword>
<keyword id="KW-0963">Cytoplasm</keyword>
<keyword id="KW-0206">Cytoskeleton</keyword>
<keyword id="KW-0539">Nucleus</keyword>
<keyword id="KW-1185">Reference proteome</keyword>
<gene>
    <name type="primary">SPC110</name>
    <name type="ordered locus">CAGL0A02596g</name>
</gene>
<organism>
    <name type="scientific">Candida glabrata (strain ATCC 2001 / BCRC 20586 / JCM 3761 / NBRC 0622 / NRRL Y-65 / CBS 138)</name>
    <name type="common">Yeast</name>
    <name type="synonym">Nakaseomyces glabratus</name>
    <dbReference type="NCBI Taxonomy" id="284593"/>
    <lineage>
        <taxon>Eukaryota</taxon>
        <taxon>Fungi</taxon>
        <taxon>Dikarya</taxon>
        <taxon>Ascomycota</taxon>
        <taxon>Saccharomycotina</taxon>
        <taxon>Saccharomycetes</taxon>
        <taxon>Saccharomycetales</taxon>
        <taxon>Saccharomycetaceae</taxon>
        <taxon>Nakaseomyces</taxon>
    </lineage>
</organism>
<evidence type="ECO:0000250" key="1"/>
<evidence type="ECO:0000255" key="2"/>
<evidence type="ECO:0000256" key="3">
    <source>
        <dbReference type="SAM" id="MobiDB-lite"/>
    </source>
</evidence>
<evidence type="ECO:0000305" key="4"/>
<sequence length="872" mass="102928">MSDIKNFEFTPIGYIKSKSGENDAKETLMSPTGASVRSPGSVGHVRKARRRSINDTVNSSRVENDNDTFDETLPELEMRKLPQYRRVPESRTSARNSGAAPQEEQNRNDYSDILSKTSNPIKDQEQKIKDLEHENTVLKVKNVSYRSLLANYSGGSSQNNINLVEEVSIWKTKYLETNEKLLKVKQDFESYVQKMEQEKEVNTDQEKTKEPEVIPIDNPEYIKEREHILEELERVTEDFKNLRDRYNDLEIKFLSIQNELDEKKQEFESSTARLNEEIHTLKSTIDDKDATISEFKRKLGNAEDQLASIDDQNGNQNQKLLHDLKEREDAIDGLKEDIIEKENAIVHYKEEIQDKQNQLKESESKYAEVQKEFEDFKRELKKQTFEFEDGKKSTSRQLQELSVEKIQLEKQVCNLRGQIEKLEQQHRLTQSENDGLRTKLKHIESDLKNEKSRTEVKIKDLTSDLEDARKNLGEANNTIKELHHEIIKNATKSKDQLSEEVVEKDKEIDQLKHRVQRLDEELRTSQAELDKATKNREVDHELEIRRLQNKHEIEQESLKRELAHMTDEKERLVDLHRLDIETWERQIEALRKENENLISREHKESNNIEITLQDKNIQIRRLEADIVQLNEERNDILNKLRSLEQAKDRYKSEMKDALETISRLRVDLENNKSLKDSKDSLIERKYEKLKDEFKLMKKGYLDEMIKLQSRNRELNSDLQKRMDPSISTSANTTLADKLDYYKLKYNDEVRHNNDLRVINEYLNRVLRASAQDIRLNLLKVENDLNIDIHKENVPLSAPLSSSGGRPYSSSYTREFDKYDYRYRQKGKRFKTVALAVLAVIRMYRAAKKHNWNEQRIRYLQRKIIAKEDRITW</sequence>
<proteinExistence type="inferred from homology"/>